<protein>
    <recommendedName>
        <fullName evidence="1">DNA-directed RNA polymerase subunit beta</fullName>
        <shortName evidence="1">RNAP subunit beta</shortName>
        <ecNumber evidence="1">2.7.7.6</ecNumber>
    </recommendedName>
    <alternativeName>
        <fullName evidence="1">RNA polymerase subunit beta</fullName>
    </alternativeName>
    <alternativeName>
        <fullName evidence="1">Transcriptase subunit beta</fullName>
    </alternativeName>
</protein>
<proteinExistence type="inferred from homology"/>
<comment type="function">
    <text evidence="1">DNA-dependent RNA polymerase catalyzes the transcription of DNA into RNA using the four ribonucleoside triphosphates as substrates.</text>
</comment>
<comment type="catalytic activity">
    <reaction evidence="1">
        <text>RNA(n) + a ribonucleoside 5'-triphosphate = RNA(n+1) + diphosphate</text>
        <dbReference type="Rhea" id="RHEA:21248"/>
        <dbReference type="Rhea" id="RHEA-COMP:14527"/>
        <dbReference type="Rhea" id="RHEA-COMP:17342"/>
        <dbReference type="ChEBI" id="CHEBI:33019"/>
        <dbReference type="ChEBI" id="CHEBI:61557"/>
        <dbReference type="ChEBI" id="CHEBI:140395"/>
        <dbReference type="EC" id="2.7.7.6"/>
    </reaction>
</comment>
<comment type="subunit">
    <text evidence="1">The RNAP catalytic core consists of 2 alpha, 1 beta, 1 beta' and 1 omega subunit. When a sigma factor is associated with the core the holoenzyme is formed, which can initiate transcription.</text>
</comment>
<comment type="similarity">
    <text evidence="1">Belongs to the RNA polymerase beta chain family.</text>
</comment>
<sequence>MVYSYTEKKRIRKDFGKRPQVLDVSYLLSIQLDSFQKFIERDPEGQYGLEAAFRSVFPIQSYSGNSELQYVSYRLGEPVFDVKECQIRGVTFSAPLRVKLRLIIYEREAPEGTVKDIKEQEVYMGEIPLMTDNGTFVINGTERVIVSQLHRSPGVFFDSDKGKTHSSGKVLYNARIIPYRGSWLDFEFDPKDNLFVRIDRRRKLPATIILRALNYSTGQILDTFFDKVVYEIHDKKLQMELLPERLRGETASFDIEANGTVYVEKGRRITARHIRQLEKDGVAQIEVPVEYIIGKAVVKDYIDENTGEIIVPANMELTLDLLAKLSQAGHKRIETLFTNDLDHGAYISETLRVDPTSDRLSALVEIYRMMRPGEPPTREAAENLFENLFFSEDRYDLSAVGRMKFNRSLLREEIEGSGILSKDDIIEVMKKLIDIRNGKGEVDDIDHLGNRRIRSVGEMAENQFRVGLVRVERAVKERLSLGDLDTLMPQDMINAKPISAAVKEFFGSSQLSQFMDQNNPLSEITHKRRISALGPGGLTRERAGFEVRDVHPTHYGRVCPIETPEGPNIGLINSLSVYAQTNEYGFLETPYRRVQDGVVTDEIHYLSAIEEGNFVIAQANTNLGDDGSFVDDLVTCRSKGESSLFSRDQVDYMDVSTQQVVSVGASLIPFLEHDDANRALMGANMQRQAVPTLCTDKPLVGTGMERAVAVDSGVTAVAKRGGTVQYVDASRIVINVNPDEMYPGEAGIDIYNLTKYIRSNQNTCISQTPCVSLGEPVERGDVLADGPSTDLGELALGQNMRIAFMPWNGYNFEDSMLVSERVVQEDRFTTIHIQELACVSRDTKLGPEEITADIPNVGEAALSKLDESGIVYIGAEVTGGDILVGKVTPKGETQLTPEEKLLRAIFGEKASDVKDSSLRVPNGVSGTVIDVQVFTRDGVEKDKRALEIEEMQLKQAKKDLTEELQIFEAGLFARIRDVLISGGIEAEKLDKLTRERWLELGLADEEKQNQLEQLAEQYDELKHEFEKKLEAKRRKITQGDDLAPGVLKIVKVYLAVKRQIQPGDKMAGRHGNKGVISKINPIEDMPYDENGVPVDIVLNPLGVPSRMNIGQILETHLGMAAKGIGDKINAMLKQHEEVAKLREFIQKAYNLGDDVRQKVDLNTFSDEEVLRLAENLKKGMPIATPVFDGAKEKEIKELLQLGGLPTSGQITLFDGRTGEQFERQVTVGYMYMLKLNHLVDDKMHARSTGSYSLVTQQPLGGKAQFGGQRFGEMEVWALEAYGAAYTLQEMLTVKSDDVNGRTKMYKNIVDGNHMMEPGMPESFNVLLKEIRSLGINIELEED</sequence>
<evidence type="ECO:0000255" key="1">
    <source>
        <dbReference type="HAMAP-Rule" id="MF_01321"/>
    </source>
</evidence>
<feature type="chain" id="PRO_0000237313" description="DNA-directed RNA polymerase subunit beta">
    <location>
        <begin position="1"/>
        <end position="1342"/>
    </location>
</feature>
<reference key="1">
    <citation type="journal article" date="2006" name="Genome Res.">
        <title>Massive genome erosion and functional adaptations provide insights into the symbiotic lifestyle of Sodalis glossinidius in the tsetse host.</title>
        <authorList>
            <person name="Toh H."/>
            <person name="Weiss B.L."/>
            <person name="Perkin S.A.H."/>
            <person name="Yamashita A."/>
            <person name="Oshima K."/>
            <person name="Hattori M."/>
            <person name="Aksoy S."/>
        </authorList>
    </citation>
    <scope>NUCLEOTIDE SEQUENCE [LARGE SCALE GENOMIC DNA]</scope>
    <source>
        <strain>morsitans</strain>
    </source>
</reference>
<keyword id="KW-0240">DNA-directed RNA polymerase</keyword>
<keyword id="KW-0548">Nucleotidyltransferase</keyword>
<keyword id="KW-0804">Transcription</keyword>
<keyword id="KW-0808">Transferase</keyword>
<name>RPOB_SODGM</name>
<organism>
    <name type="scientific">Sodalis glossinidius (strain morsitans)</name>
    <dbReference type="NCBI Taxonomy" id="343509"/>
    <lineage>
        <taxon>Bacteria</taxon>
        <taxon>Pseudomonadati</taxon>
        <taxon>Pseudomonadota</taxon>
        <taxon>Gammaproteobacteria</taxon>
        <taxon>Enterobacterales</taxon>
        <taxon>Bruguierivoracaceae</taxon>
        <taxon>Sodalis</taxon>
    </lineage>
</organism>
<accession>Q2NWR6</accession>
<dbReference type="EC" id="2.7.7.6" evidence="1"/>
<dbReference type="EMBL" id="AP008232">
    <property type="protein sequence ID" value="BAE73409.1"/>
    <property type="molecule type" value="Genomic_DNA"/>
</dbReference>
<dbReference type="RefSeq" id="WP_011409998.1">
    <property type="nucleotide sequence ID" value="NC_007712.1"/>
</dbReference>
<dbReference type="SMR" id="Q2NWR6"/>
<dbReference type="STRING" id="343509.SG0134"/>
<dbReference type="KEGG" id="sgl:SG0134"/>
<dbReference type="eggNOG" id="COG0085">
    <property type="taxonomic scope" value="Bacteria"/>
</dbReference>
<dbReference type="HOGENOM" id="CLU_000524_4_0_6"/>
<dbReference type="OrthoDB" id="9803954at2"/>
<dbReference type="BioCyc" id="SGLO343509:SGP1_RS01125-MONOMER"/>
<dbReference type="Proteomes" id="UP000001932">
    <property type="component" value="Chromosome"/>
</dbReference>
<dbReference type="GO" id="GO:0000428">
    <property type="term" value="C:DNA-directed RNA polymerase complex"/>
    <property type="evidence" value="ECO:0007669"/>
    <property type="project" value="UniProtKB-KW"/>
</dbReference>
<dbReference type="GO" id="GO:0003677">
    <property type="term" value="F:DNA binding"/>
    <property type="evidence" value="ECO:0007669"/>
    <property type="project" value="UniProtKB-UniRule"/>
</dbReference>
<dbReference type="GO" id="GO:0003899">
    <property type="term" value="F:DNA-directed RNA polymerase activity"/>
    <property type="evidence" value="ECO:0007669"/>
    <property type="project" value="UniProtKB-UniRule"/>
</dbReference>
<dbReference type="GO" id="GO:0032549">
    <property type="term" value="F:ribonucleoside binding"/>
    <property type="evidence" value="ECO:0007669"/>
    <property type="project" value="InterPro"/>
</dbReference>
<dbReference type="GO" id="GO:0006351">
    <property type="term" value="P:DNA-templated transcription"/>
    <property type="evidence" value="ECO:0007669"/>
    <property type="project" value="UniProtKB-UniRule"/>
</dbReference>
<dbReference type="CDD" id="cd00653">
    <property type="entry name" value="RNA_pol_B_RPB2"/>
    <property type="match status" value="1"/>
</dbReference>
<dbReference type="FunFam" id="2.30.150.10:FF:000001">
    <property type="entry name" value="DNA-directed RNA polymerase subunit beta"/>
    <property type="match status" value="1"/>
</dbReference>
<dbReference type="FunFam" id="2.40.270.10:FF:000003">
    <property type="entry name" value="DNA-directed RNA polymerase subunit beta"/>
    <property type="match status" value="1"/>
</dbReference>
<dbReference type="FunFam" id="2.40.270.10:FF:000004">
    <property type="entry name" value="DNA-directed RNA polymerase subunit beta"/>
    <property type="match status" value="1"/>
</dbReference>
<dbReference type="FunFam" id="2.40.50.100:FF:000006">
    <property type="entry name" value="DNA-directed RNA polymerase subunit beta"/>
    <property type="match status" value="1"/>
</dbReference>
<dbReference type="FunFam" id="2.40.50.150:FF:000001">
    <property type="entry name" value="DNA-directed RNA polymerase subunit beta"/>
    <property type="match status" value="1"/>
</dbReference>
<dbReference type="FunFam" id="3.90.1100.10:FF:000002">
    <property type="entry name" value="DNA-directed RNA polymerase subunit beta"/>
    <property type="match status" value="1"/>
</dbReference>
<dbReference type="FunFam" id="3.90.1110.10:FF:000001">
    <property type="entry name" value="DNA-directed RNA polymerase subunit beta"/>
    <property type="match status" value="1"/>
</dbReference>
<dbReference type="FunFam" id="3.90.1110.10:FF:000004">
    <property type="entry name" value="DNA-directed RNA polymerase subunit beta"/>
    <property type="match status" value="1"/>
</dbReference>
<dbReference type="FunFam" id="3.90.1800.10:FF:000001">
    <property type="entry name" value="DNA-directed RNA polymerase subunit beta"/>
    <property type="match status" value="1"/>
</dbReference>
<dbReference type="Gene3D" id="2.40.50.100">
    <property type="match status" value="1"/>
</dbReference>
<dbReference type="Gene3D" id="2.40.50.150">
    <property type="match status" value="1"/>
</dbReference>
<dbReference type="Gene3D" id="3.90.1100.10">
    <property type="match status" value="2"/>
</dbReference>
<dbReference type="Gene3D" id="2.30.150.10">
    <property type="entry name" value="DNA-directed RNA polymerase, beta subunit, external 1 domain"/>
    <property type="match status" value="1"/>
</dbReference>
<dbReference type="Gene3D" id="2.40.270.10">
    <property type="entry name" value="DNA-directed RNA polymerase, subunit 2, domain 6"/>
    <property type="match status" value="2"/>
</dbReference>
<dbReference type="Gene3D" id="3.90.1800.10">
    <property type="entry name" value="RNA polymerase alpha subunit dimerisation domain"/>
    <property type="match status" value="1"/>
</dbReference>
<dbReference type="Gene3D" id="3.90.1110.10">
    <property type="entry name" value="RNA polymerase Rpb2, domain 2"/>
    <property type="match status" value="2"/>
</dbReference>
<dbReference type="HAMAP" id="MF_01321">
    <property type="entry name" value="RNApol_bact_RpoB"/>
    <property type="match status" value="1"/>
</dbReference>
<dbReference type="InterPro" id="IPR042107">
    <property type="entry name" value="DNA-dir_RNA_pol_bsu_ext_1_sf"/>
</dbReference>
<dbReference type="InterPro" id="IPR019462">
    <property type="entry name" value="DNA-dir_RNA_pol_bsu_external_1"/>
</dbReference>
<dbReference type="InterPro" id="IPR015712">
    <property type="entry name" value="DNA-dir_RNA_pol_su2"/>
</dbReference>
<dbReference type="InterPro" id="IPR007120">
    <property type="entry name" value="DNA-dir_RNAP_su2_dom"/>
</dbReference>
<dbReference type="InterPro" id="IPR037033">
    <property type="entry name" value="DNA-dir_RNAP_su2_hyb_sf"/>
</dbReference>
<dbReference type="InterPro" id="IPR010243">
    <property type="entry name" value="RNA_pol_bsu_bac"/>
</dbReference>
<dbReference type="InterPro" id="IPR007121">
    <property type="entry name" value="RNA_pol_bsu_CS"/>
</dbReference>
<dbReference type="InterPro" id="IPR007644">
    <property type="entry name" value="RNA_pol_bsu_protrusion"/>
</dbReference>
<dbReference type="InterPro" id="IPR007642">
    <property type="entry name" value="RNA_pol_Rpb2_2"/>
</dbReference>
<dbReference type="InterPro" id="IPR037034">
    <property type="entry name" value="RNA_pol_Rpb2_2_sf"/>
</dbReference>
<dbReference type="InterPro" id="IPR007645">
    <property type="entry name" value="RNA_pol_Rpb2_3"/>
</dbReference>
<dbReference type="InterPro" id="IPR007641">
    <property type="entry name" value="RNA_pol_Rpb2_7"/>
</dbReference>
<dbReference type="InterPro" id="IPR014724">
    <property type="entry name" value="RNA_pol_RPB2_OB-fold"/>
</dbReference>
<dbReference type="NCBIfam" id="NF001616">
    <property type="entry name" value="PRK00405.1"/>
    <property type="match status" value="1"/>
</dbReference>
<dbReference type="NCBIfam" id="TIGR02013">
    <property type="entry name" value="rpoB"/>
    <property type="match status" value="1"/>
</dbReference>
<dbReference type="PANTHER" id="PTHR20856">
    <property type="entry name" value="DNA-DIRECTED RNA POLYMERASE I SUBUNIT 2"/>
    <property type="match status" value="1"/>
</dbReference>
<dbReference type="Pfam" id="PF04563">
    <property type="entry name" value="RNA_pol_Rpb2_1"/>
    <property type="match status" value="1"/>
</dbReference>
<dbReference type="Pfam" id="PF04561">
    <property type="entry name" value="RNA_pol_Rpb2_2"/>
    <property type="match status" value="2"/>
</dbReference>
<dbReference type="Pfam" id="PF04565">
    <property type="entry name" value="RNA_pol_Rpb2_3"/>
    <property type="match status" value="1"/>
</dbReference>
<dbReference type="Pfam" id="PF10385">
    <property type="entry name" value="RNA_pol_Rpb2_45"/>
    <property type="match status" value="1"/>
</dbReference>
<dbReference type="Pfam" id="PF00562">
    <property type="entry name" value="RNA_pol_Rpb2_6"/>
    <property type="match status" value="1"/>
</dbReference>
<dbReference type="Pfam" id="PF04560">
    <property type="entry name" value="RNA_pol_Rpb2_7"/>
    <property type="match status" value="1"/>
</dbReference>
<dbReference type="SUPFAM" id="SSF64484">
    <property type="entry name" value="beta and beta-prime subunits of DNA dependent RNA-polymerase"/>
    <property type="match status" value="1"/>
</dbReference>
<dbReference type="PROSITE" id="PS01166">
    <property type="entry name" value="RNA_POL_BETA"/>
    <property type="match status" value="1"/>
</dbReference>
<gene>
    <name evidence="1" type="primary">rpoB</name>
    <name type="ordered locus">SG0134</name>
</gene>